<comment type="function">
    <text evidence="1">Catalyzes the reduction of hydroxylamine to form NH(3) and H(2)O.</text>
</comment>
<comment type="catalytic activity">
    <reaction evidence="1">
        <text>A + NH4(+) + H2O = hydroxylamine + AH2 + H(+)</text>
        <dbReference type="Rhea" id="RHEA:22052"/>
        <dbReference type="ChEBI" id="CHEBI:13193"/>
        <dbReference type="ChEBI" id="CHEBI:15377"/>
        <dbReference type="ChEBI" id="CHEBI:15378"/>
        <dbReference type="ChEBI" id="CHEBI:15429"/>
        <dbReference type="ChEBI" id="CHEBI:17499"/>
        <dbReference type="ChEBI" id="CHEBI:28938"/>
        <dbReference type="EC" id="1.7.99.1"/>
    </reaction>
</comment>
<comment type="cofactor">
    <cofactor evidence="1">
        <name>[4Fe-4S] cluster</name>
        <dbReference type="ChEBI" id="CHEBI:49883"/>
    </cofactor>
    <text evidence="1">Binds 1 [4Fe-4S] cluster.</text>
</comment>
<comment type="cofactor">
    <cofactor evidence="1">
        <name>hybrid [4Fe-2O-2S] cluster</name>
        <dbReference type="ChEBI" id="CHEBI:60519"/>
    </cofactor>
    <text evidence="1">Binds 1 hybrid [4Fe-2O-2S] cluster.</text>
</comment>
<comment type="subcellular location">
    <subcellularLocation>
        <location evidence="1">Cytoplasm</location>
    </subcellularLocation>
</comment>
<comment type="similarity">
    <text evidence="1">Belongs to the HCP family.</text>
</comment>
<sequence length="547" mass="61008">MSMFCYQCQEASQGIGCTVRGVCGKTDDVANLQDLLIFTLKGISFLNLKARETGVNKEKTDRFLFEGLFSTITNVNFDRNFFINKIKEAVALREEIKEDLKKAGIEVDESCEAIHWVYDTDEDIEAIAAEVGVLSTKDEDIRSLRELITYGVKGMAAYAYHAYQLGYKDDNIFRFMEKALAKVLDDSLTADDYVALALEAGKYGVDTMALLDKANTSTYGHPEITKVNIGVRNNPGILISGHDLKDLEQLLEQTAGTGVDVYTHGEMLPAHYYPAFKKYPHFVGNYGNAWWQQDREFELFNGPILMTTNCLVPPKDSYKDRVYTTGVVGFEGVKYIPEGPDGKKDFSEIIEHAKRCKPPVEIERGEIIGGFAHNQVLELADKIVEAVKTGAIKRFFVMAGCDGRMKSRTYYTEFAKALPKDTVILTAGCAKYRYNKLNLGDINGIPRVLDAGQCNDSYSLAVIAMKLKEVFGLNDINKLPISYNIAWYEQKAVIVLLALLYLGVKNIHLGPTLPAFLSPNVTKVLVDKFGIGGITNVEDDMKMFMGE</sequence>
<evidence type="ECO:0000255" key="1">
    <source>
        <dbReference type="HAMAP-Rule" id="MF_00069"/>
    </source>
</evidence>
<proteinExistence type="inferred from homology"/>
<gene>
    <name evidence="1" type="primary">hcp</name>
    <name type="ordered locus">Teth39_0480</name>
</gene>
<protein>
    <recommendedName>
        <fullName evidence="1">Hydroxylamine reductase</fullName>
        <ecNumber evidence="1">1.7.99.1</ecNumber>
    </recommendedName>
    <alternativeName>
        <fullName evidence="1">Hybrid-cluster protein</fullName>
        <shortName evidence="1">HCP</shortName>
    </alternativeName>
    <alternativeName>
        <fullName evidence="1">Prismane protein</fullName>
    </alternativeName>
</protein>
<keyword id="KW-0004">4Fe-4S</keyword>
<keyword id="KW-0963">Cytoplasm</keyword>
<keyword id="KW-0408">Iron</keyword>
<keyword id="KW-0411">Iron-sulfur</keyword>
<keyword id="KW-0479">Metal-binding</keyword>
<keyword id="KW-0560">Oxidoreductase</keyword>
<keyword id="KW-1185">Reference proteome</keyword>
<name>HCP_THEP3</name>
<feature type="chain" id="PRO_1000092354" description="Hydroxylamine reductase">
    <location>
        <begin position="1"/>
        <end position="547"/>
    </location>
</feature>
<feature type="binding site" evidence="1">
    <location>
        <position position="5"/>
    </location>
    <ligand>
        <name>[4Fe-4S] cluster</name>
        <dbReference type="ChEBI" id="CHEBI:49883"/>
    </ligand>
</feature>
<feature type="binding site" evidence="1">
    <location>
        <position position="8"/>
    </location>
    <ligand>
        <name>[4Fe-4S] cluster</name>
        <dbReference type="ChEBI" id="CHEBI:49883"/>
    </ligand>
</feature>
<feature type="binding site" evidence="1">
    <location>
        <position position="17"/>
    </location>
    <ligand>
        <name>[4Fe-4S] cluster</name>
        <dbReference type="ChEBI" id="CHEBI:49883"/>
    </ligand>
</feature>
<feature type="binding site" evidence="1">
    <location>
        <position position="23"/>
    </location>
    <ligand>
        <name>[4Fe-4S] cluster</name>
        <dbReference type="ChEBI" id="CHEBI:49883"/>
    </ligand>
</feature>
<feature type="binding site" evidence="1">
    <location>
        <position position="242"/>
    </location>
    <ligand>
        <name>hybrid [4Fe-2O-2S] cluster</name>
        <dbReference type="ChEBI" id="CHEBI:60519"/>
    </ligand>
</feature>
<feature type="binding site" evidence="1">
    <location>
        <position position="266"/>
    </location>
    <ligand>
        <name>hybrid [4Fe-2O-2S] cluster</name>
        <dbReference type="ChEBI" id="CHEBI:60519"/>
    </ligand>
</feature>
<feature type="binding site" evidence="1">
    <location>
        <position position="310"/>
    </location>
    <ligand>
        <name>hybrid [4Fe-2O-2S] cluster</name>
        <dbReference type="ChEBI" id="CHEBI:60519"/>
    </ligand>
</feature>
<feature type="binding site" description="via persulfide group" evidence="1">
    <location>
        <position position="401"/>
    </location>
    <ligand>
        <name>hybrid [4Fe-2O-2S] cluster</name>
        <dbReference type="ChEBI" id="CHEBI:60519"/>
    </ligand>
</feature>
<feature type="binding site" evidence="1">
    <location>
        <position position="429"/>
    </location>
    <ligand>
        <name>hybrid [4Fe-2O-2S] cluster</name>
        <dbReference type="ChEBI" id="CHEBI:60519"/>
    </ligand>
</feature>
<feature type="binding site" evidence="1">
    <location>
        <position position="454"/>
    </location>
    <ligand>
        <name>hybrid [4Fe-2O-2S] cluster</name>
        <dbReference type="ChEBI" id="CHEBI:60519"/>
    </ligand>
</feature>
<feature type="binding site" evidence="1">
    <location>
        <position position="489"/>
    </location>
    <ligand>
        <name>hybrid [4Fe-2O-2S] cluster</name>
        <dbReference type="ChEBI" id="CHEBI:60519"/>
    </ligand>
</feature>
<feature type="binding site" evidence="1">
    <location>
        <position position="491"/>
    </location>
    <ligand>
        <name>hybrid [4Fe-2O-2S] cluster</name>
        <dbReference type="ChEBI" id="CHEBI:60519"/>
    </ligand>
</feature>
<feature type="modified residue" description="Cysteine persulfide" evidence="1">
    <location>
        <position position="401"/>
    </location>
</feature>
<dbReference type="EC" id="1.7.99.1" evidence="1"/>
<dbReference type="EMBL" id="CP000924">
    <property type="protein sequence ID" value="ABY94146.1"/>
    <property type="molecule type" value="Genomic_DNA"/>
</dbReference>
<dbReference type="RefSeq" id="WP_003867463.1">
    <property type="nucleotide sequence ID" value="NC_010321.1"/>
</dbReference>
<dbReference type="SMR" id="B0KD48"/>
<dbReference type="STRING" id="340099.Teth39_0480"/>
<dbReference type="KEGG" id="tpd:Teth39_0480"/>
<dbReference type="eggNOG" id="COG1151">
    <property type="taxonomic scope" value="Bacteria"/>
</dbReference>
<dbReference type="HOGENOM" id="CLU_038344_2_0_9"/>
<dbReference type="Proteomes" id="UP000002156">
    <property type="component" value="Chromosome"/>
</dbReference>
<dbReference type="GO" id="GO:0005737">
    <property type="term" value="C:cytoplasm"/>
    <property type="evidence" value="ECO:0007669"/>
    <property type="project" value="UniProtKB-SubCell"/>
</dbReference>
<dbReference type="GO" id="GO:0051539">
    <property type="term" value="F:4 iron, 4 sulfur cluster binding"/>
    <property type="evidence" value="ECO:0007669"/>
    <property type="project" value="UniProtKB-KW"/>
</dbReference>
<dbReference type="GO" id="GO:0050418">
    <property type="term" value="F:hydroxylamine reductase activity"/>
    <property type="evidence" value="ECO:0007669"/>
    <property type="project" value="UniProtKB-UniRule"/>
</dbReference>
<dbReference type="GO" id="GO:0046872">
    <property type="term" value="F:metal ion binding"/>
    <property type="evidence" value="ECO:0007669"/>
    <property type="project" value="UniProtKB-KW"/>
</dbReference>
<dbReference type="GO" id="GO:0004601">
    <property type="term" value="F:peroxidase activity"/>
    <property type="evidence" value="ECO:0007669"/>
    <property type="project" value="TreeGrafter"/>
</dbReference>
<dbReference type="GO" id="GO:0042542">
    <property type="term" value="P:response to hydrogen peroxide"/>
    <property type="evidence" value="ECO:0007669"/>
    <property type="project" value="TreeGrafter"/>
</dbReference>
<dbReference type="CDD" id="cd01914">
    <property type="entry name" value="HCP"/>
    <property type="match status" value="1"/>
</dbReference>
<dbReference type="FunFam" id="1.20.1270.20:FF:000001">
    <property type="entry name" value="Hydroxylamine reductase"/>
    <property type="match status" value="1"/>
</dbReference>
<dbReference type="FunFam" id="3.40.50.2030:FF:000001">
    <property type="entry name" value="Hydroxylamine reductase"/>
    <property type="match status" value="1"/>
</dbReference>
<dbReference type="FunFam" id="3.40.50.2030:FF:000002">
    <property type="entry name" value="Hydroxylamine reductase"/>
    <property type="match status" value="1"/>
</dbReference>
<dbReference type="Gene3D" id="1.20.1270.20">
    <property type="match status" value="2"/>
</dbReference>
<dbReference type="Gene3D" id="3.40.50.2030">
    <property type="match status" value="2"/>
</dbReference>
<dbReference type="HAMAP" id="MF_00069">
    <property type="entry name" value="Hydroxylam_reduct"/>
    <property type="match status" value="1"/>
</dbReference>
<dbReference type="InterPro" id="IPR004137">
    <property type="entry name" value="HCP/CODH"/>
</dbReference>
<dbReference type="InterPro" id="IPR010048">
    <property type="entry name" value="Hydroxylam_reduct"/>
</dbReference>
<dbReference type="InterPro" id="IPR016099">
    <property type="entry name" value="Prismane-like_a/b-sand"/>
</dbReference>
<dbReference type="InterPro" id="IPR011254">
    <property type="entry name" value="Prismane-like_sf"/>
</dbReference>
<dbReference type="InterPro" id="IPR016100">
    <property type="entry name" value="Prismane_a-bundle"/>
</dbReference>
<dbReference type="NCBIfam" id="TIGR01703">
    <property type="entry name" value="hybrid_clust"/>
    <property type="match status" value="1"/>
</dbReference>
<dbReference type="NCBIfam" id="NF003658">
    <property type="entry name" value="PRK05290.1"/>
    <property type="match status" value="1"/>
</dbReference>
<dbReference type="PANTHER" id="PTHR30109">
    <property type="entry name" value="HYDROXYLAMINE REDUCTASE"/>
    <property type="match status" value="1"/>
</dbReference>
<dbReference type="PANTHER" id="PTHR30109:SF0">
    <property type="entry name" value="HYDROXYLAMINE REDUCTASE"/>
    <property type="match status" value="1"/>
</dbReference>
<dbReference type="Pfam" id="PF03063">
    <property type="entry name" value="Prismane"/>
    <property type="match status" value="1"/>
</dbReference>
<dbReference type="PIRSF" id="PIRSF000076">
    <property type="entry name" value="HCP"/>
    <property type="match status" value="1"/>
</dbReference>
<dbReference type="SUPFAM" id="SSF56821">
    <property type="entry name" value="Prismane protein-like"/>
    <property type="match status" value="1"/>
</dbReference>
<reference key="1">
    <citation type="submission" date="2008-01" db="EMBL/GenBank/DDBJ databases">
        <title>Complete sequence of Thermoanaerobacter pseudethanolicus 39E.</title>
        <authorList>
            <person name="Copeland A."/>
            <person name="Lucas S."/>
            <person name="Lapidus A."/>
            <person name="Barry K."/>
            <person name="Glavina del Rio T."/>
            <person name="Dalin E."/>
            <person name="Tice H."/>
            <person name="Pitluck S."/>
            <person name="Bruce D."/>
            <person name="Goodwin L."/>
            <person name="Saunders E."/>
            <person name="Brettin T."/>
            <person name="Detter J.C."/>
            <person name="Han C."/>
            <person name="Schmutz J."/>
            <person name="Larimer F."/>
            <person name="Land M."/>
            <person name="Hauser L."/>
            <person name="Kyrpides N."/>
            <person name="Lykidis A."/>
            <person name="Hemme C."/>
            <person name="Fields M.W."/>
            <person name="He Z."/>
            <person name="Zhou J."/>
            <person name="Richardson P."/>
        </authorList>
    </citation>
    <scope>NUCLEOTIDE SEQUENCE [LARGE SCALE GENOMIC DNA]</scope>
    <source>
        <strain>ATCC 33223 / DSM 2355 / 39E</strain>
    </source>
</reference>
<accession>B0KD48</accession>
<organism>
    <name type="scientific">Thermoanaerobacter pseudethanolicus (strain ATCC 33223 / 39E)</name>
    <name type="common">Clostridium thermohydrosulfuricum</name>
    <dbReference type="NCBI Taxonomy" id="340099"/>
    <lineage>
        <taxon>Bacteria</taxon>
        <taxon>Bacillati</taxon>
        <taxon>Bacillota</taxon>
        <taxon>Clostridia</taxon>
        <taxon>Thermoanaerobacterales</taxon>
        <taxon>Thermoanaerobacteraceae</taxon>
        <taxon>Thermoanaerobacter</taxon>
    </lineage>
</organism>